<keyword id="KW-0067">ATP-binding</keyword>
<keyword id="KW-0347">Helicase</keyword>
<keyword id="KW-0378">Hydrolase</keyword>
<keyword id="KW-0547">Nucleotide-binding</keyword>
<keyword id="KW-0539">Nucleus</keyword>
<keyword id="KW-1185">Reference proteome</keyword>
<keyword id="KW-0690">Ribosome biogenesis</keyword>
<keyword id="KW-0694">RNA-binding</keyword>
<keyword id="KW-0698">rRNA processing</keyword>
<dbReference type="EC" id="3.6.4.13"/>
<dbReference type="EMBL" id="AAVQ01000001">
    <property type="protein sequence ID" value="EAZ63509.2"/>
    <property type="molecule type" value="Genomic_DNA"/>
</dbReference>
<dbReference type="SMR" id="A3GGE9"/>
<dbReference type="FunCoup" id="A3GGE9">
    <property type="interactions" value="1096"/>
</dbReference>
<dbReference type="STRING" id="322104.A3GGE9"/>
<dbReference type="KEGG" id="pic:PICST_51414"/>
<dbReference type="eggNOG" id="KOG0343">
    <property type="taxonomic scope" value="Eukaryota"/>
</dbReference>
<dbReference type="HOGENOM" id="CLU_003041_26_1_1"/>
<dbReference type="InParanoid" id="A3GGE9"/>
<dbReference type="OMA" id="YDKMFER"/>
<dbReference type="OrthoDB" id="10259640at2759"/>
<dbReference type="Proteomes" id="UP000002258">
    <property type="component" value="Chromosome 1"/>
</dbReference>
<dbReference type="GO" id="GO:0005730">
    <property type="term" value="C:nucleolus"/>
    <property type="evidence" value="ECO:0007669"/>
    <property type="project" value="UniProtKB-SubCell"/>
</dbReference>
<dbReference type="GO" id="GO:0032040">
    <property type="term" value="C:small-subunit processome"/>
    <property type="evidence" value="ECO:0007669"/>
    <property type="project" value="EnsemblFungi"/>
</dbReference>
<dbReference type="GO" id="GO:0005524">
    <property type="term" value="F:ATP binding"/>
    <property type="evidence" value="ECO:0007669"/>
    <property type="project" value="UniProtKB-KW"/>
</dbReference>
<dbReference type="GO" id="GO:0016887">
    <property type="term" value="F:ATP hydrolysis activity"/>
    <property type="evidence" value="ECO:0007669"/>
    <property type="project" value="RHEA"/>
</dbReference>
<dbReference type="GO" id="GO:0042802">
    <property type="term" value="F:identical protein binding"/>
    <property type="evidence" value="ECO:0007669"/>
    <property type="project" value="EnsemblFungi"/>
</dbReference>
<dbReference type="GO" id="GO:0003723">
    <property type="term" value="F:RNA binding"/>
    <property type="evidence" value="ECO:0007669"/>
    <property type="project" value="UniProtKB-KW"/>
</dbReference>
<dbReference type="GO" id="GO:0003724">
    <property type="term" value="F:RNA helicase activity"/>
    <property type="evidence" value="ECO:0007669"/>
    <property type="project" value="UniProtKB-EC"/>
</dbReference>
<dbReference type="GO" id="GO:0006364">
    <property type="term" value="P:rRNA processing"/>
    <property type="evidence" value="ECO:0007669"/>
    <property type="project" value="UniProtKB-KW"/>
</dbReference>
<dbReference type="CDD" id="cd17941">
    <property type="entry name" value="DEADc_DDX10"/>
    <property type="match status" value="1"/>
</dbReference>
<dbReference type="CDD" id="cd18787">
    <property type="entry name" value="SF2_C_DEAD"/>
    <property type="match status" value="1"/>
</dbReference>
<dbReference type="Gene3D" id="3.40.50.300">
    <property type="entry name" value="P-loop containing nucleotide triphosphate hydrolases"/>
    <property type="match status" value="2"/>
</dbReference>
<dbReference type="InterPro" id="IPR011545">
    <property type="entry name" value="DEAD/DEAH_box_helicase_dom"/>
</dbReference>
<dbReference type="InterPro" id="IPR014001">
    <property type="entry name" value="Helicase_ATP-bd"/>
</dbReference>
<dbReference type="InterPro" id="IPR001650">
    <property type="entry name" value="Helicase_C-like"/>
</dbReference>
<dbReference type="InterPro" id="IPR027417">
    <property type="entry name" value="P-loop_NTPase"/>
</dbReference>
<dbReference type="InterPro" id="IPR000629">
    <property type="entry name" value="RNA-helicase_DEAD-box_CS"/>
</dbReference>
<dbReference type="InterPro" id="IPR014014">
    <property type="entry name" value="RNA_helicase_DEAD_Q_motif"/>
</dbReference>
<dbReference type="InterPro" id="IPR025313">
    <property type="entry name" value="SPB4-like_CTE"/>
</dbReference>
<dbReference type="PANTHER" id="PTHR24031">
    <property type="entry name" value="RNA HELICASE"/>
    <property type="match status" value="1"/>
</dbReference>
<dbReference type="Pfam" id="PF13959">
    <property type="entry name" value="CTE_SPB4"/>
    <property type="match status" value="1"/>
</dbReference>
<dbReference type="Pfam" id="PF00270">
    <property type="entry name" value="DEAD"/>
    <property type="match status" value="1"/>
</dbReference>
<dbReference type="Pfam" id="PF00271">
    <property type="entry name" value="Helicase_C"/>
    <property type="match status" value="1"/>
</dbReference>
<dbReference type="SMART" id="SM00487">
    <property type="entry name" value="DEXDc"/>
    <property type="match status" value="1"/>
</dbReference>
<dbReference type="SMART" id="SM01178">
    <property type="entry name" value="DUF4217"/>
    <property type="match status" value="1"/>
</dbReference>
<dbReference type="SMART" id="SM00490">
    <property type="entry name" value="HELICc"/>
    <property type="match status" value="1"/>
</dbReference>
<dbReference type="SUPFAM" id="SSF52540">
    <property type="entry name" value="P-loop containing nucleoside triphosphate hydrolases"/>
    <property type="match status" value="1"/>
</dbReference>
<dbReference type="PROSITE" id="PS00039">
    <property type="entry name" value="DEAD_ATP_HELICASE"/>
    <property type="match status" value="1"/>
</dbReference>
<dbReference type="PROSITE" id="PS51192">
    <property type="entry name" value="HELICASE_ATP_BIND_1"/>
    <property type="match status" value="1"/>
</dbReference>
<dbReference type="PROSITE" id="PS51194">
    <property type="entry name" value="HELICASE_CTER"/>
    <property type="match status" value="1"/>
</dbReference>
<dbReference type="PROSITE" id="PS51195">
    <property type="entry name" value="Q_MOTIF"/>
    <property type="match status" value="1"/>
</dbReference>
<comment type="function">
    <text evidence="1">ATP-dependent RNA helicase required for ribosome biogenesis. Involved in the release of U14 snoRNA in pre-ribosomal complexes. Required for pre-rRNA cleavage at site A2 (By similarity).</text>
</comment>
<comment type="catalytic activity">
    <reaction>
        <text>ATP + H2O = ADP + phosphate + H(+)</text>
        <dbReference type="Rhea" id="RHEA:13065"/>
        <dbReference type="ChEBI" id="CHEBI:15377"/>
        <dbReference type="ChEBI" id="CHEBI:15378"/>
        <dbReference type="ChEBI" id="CHEBI:30616"/>
        <dbReference type="ChEBI" id="CHEBI:43474"/>
        <dbReference type="ChEBI" id="CHEBI:456216"/>
        <dbReference type="EC" id="3.6.4.13"/>
    </reaction>
</comment>
<comment type="subunit">
    <text evidence="1">Interacts with the U3 and U14 snoRNAs. Associates with pre-ribosomal complexes (By similarity).</text>
</comment>
<comment type="subcellular location">
    <subcellularLocation>
        <location evidence="1">Nucleus</location>
        <location evidence="1">Nucleolus</location>
    </subcellularLocation>
</comment>
<comment type="domain">
    <text>The Q motif is unique to and characteristic of the DEAD box family of RNA helicases and controls ATP binding and hydrolysis.</text>
</comment>
<comment type="similarity">
    <text evidence="5">Belongs to the DEAD box helicase family. DDX10/DBP4 subfamily.</text>
</comment>
<accession>A3GGE9</accession>
<organism>
    <name type="scientific">Scheffersomyces stipitis (strain ATCC 58785 / CBS 6054 / NBRC 10063 / NRRL Y-11545)</name>
    <name type="common">Yeast</name>
    <name type="synonym">Pichia stipitis</name>
    <dbReference type="NCBI Taxonomy" id="322104"/>
    <lineage>
        <taxon>Eukaryota</taxon>
        <taxon>Fungi</taxon>
        <taxon>Dikarya</taxon>
        <taxon>Ascomycota</taxon>
        <taxon>Saccharomycotina</taxon>
        <taxon>Pichiomycetes</taxon>
        <taxon>Debaryomycetaceae</taxon>
        <taxon>Scheffersomyces</taxon>
    </lineage>
</organism>
<protein>
    <recommendedName>
        <fullName>ATP-dependent RNA helicase DBP4</fullName>
        <ecNumber>3.6.4.13</ecNumber>
    </recommendedName>
</protein>
<proteinExistence type="inferred from homology"/>
<evidence type="ECO:0000250" key="1"/>
<evidence type="ECO:0000255" key="2">
    <source>
        <dbReference type="PROSITE-ProRule" id="PRU00541"/>
    </source>
</evidence>
<evidence type="ECO:0000255" key="3">
    <source>
        <dbReference type="PROSITE-ProRule" id="PRU00542"/>
    </source>
</evidence>
<evidence type="ECO:0000256" key="4">
    <source>
        <dbReference type="SAM" id="MobiDB-lite"/>
    </source>
</evidence>
<evidence type="ECO:0000305" key="5"/>
<feature type="chain" id="PRO_0000285141" description="ATP-dependent RNA helicase DBP4">
    <location>
        <begin position="1"/>
        <end position="765"/>
    </location>
</feature>
<feature type="domain" description="Helicase ATP-binding" evidence="2">
    <location>
        <begin position="78"/>
        <end position="252"/>
    </location>
</feature>
<feature type="domain" description="Helicase C-terminal" evidence="3">
    <location>
        <begin position="266"/>
        <end position="438"/>
    </location>
</feature>
<feature type="region of interest" description="Disordered" evidence="4">
    <location>
        <begin position="1"/>
        <end position="24"/>
    </location>
</feature>
<feature type="region of interest" description="Disordered" evidence="4">
    <location>
        <begin position="493"/>
        <end position="526"/>
    </location>
</feature>
<feature type="region of interest" description="Disordered" evidence="4">
    <location>
        <begin position="552"/>
        <end position="576"/>
    </location>
</feature>
<feature type="region of interest" description="Disordered" evidence="4">
    <location>
        <begin position="641"/>
        <end position="735"/>
    </location>
</feature>
<feature type="short sequence motif" description="Q motif">
    <location>
        <begin position="47"/>
        <end position="75"/>
    </location>
</feature>
<feature type="short sequence motif" description="DEAD box">
    <location>
        <begin position="200"/>
        <end position="203"/>
    </location>
</feature>
<feature type="compositionally biased region" description="Basic residues" evidence="4">
    <location>
        <begin position="1"/>
        <end position="14"/>
    </location>
</feature>
<feature type="compositionally biased region" description="Acidic residues" evidence="4">
    <location>
        <begin position="558"/>
        <end position="568"/>
    </location>
</feature>
<feature type="compositionally biased region" description="Basic and acidic residues" evidence="4">
    <location>
        <begin position="641"/>
        <end position="653"/>
    </location>
</feature>
<feature type="compositionally biased region" description="Basic and acidic residues" evidence="4">
    <location>
        <begin position="678"/>
        <end position="688"/>
    </location>
</feature>
<feature type="binding site" evidence="2">
    <location>
        <begin position="91"/>
        <end position="98"/>
    </location>
    <ligand>
        <name>ATP</name>
        <dbReference type="ChEBI" id="CHEBI:30616"/>
    </ligand>
</feature>
<gene>
    <name type="primary">DBP4</name>
    <name type="ORF">PICST_51414</name>
</gene>
<name>DBP4_PICST</name>
<sequence length="765" mass="87257">MAKPRRNNKNKKGQSRSQAREKEEAELLKLQERIDQYDPAVDEKSISQFSDLPITQETLRGLNESSFMSLTDIQKKTIPIALKGEDLMGTARTGSGKTLAFLIPVVESLIRNKITEHDGLAALIVSPTRELAVQTFEVLTKIGKYNTFSAGLVTGGKDVQYEKERVSRMNILVGTPGRISQHLNEAVGMETSNLQVLVLDEADRCLDMGFKKQIDNIVGHLPPTRQTLLFSATVSDSVKDLARLSLTNPKRIGVSSDQDVSATPESLDQYYIRIPLDEKLDVLWSFIKSHLKSKILVFFSSSKQVQYAYETFRTLQPGISLLKLYGRHKQTSRLETTVKFTQAQYACLFATDIVARGLDFPAIDWVVQVDCPEDAVTYVHRVGRAARFGRQGKSLLMLLPSEEEGMLKRLENNKIEPKFMNIKQKSKKSIRPQLQSLCFKDPMIKNLGQRAFISYYKSVYIQKDKDVFKVEELPSEKYAASLGLPGAPKIKIKGGSSSKEKKNASRQLVALSKTNEDGESVENEASKVRTKYDRMFERKNQNVLSEHYLKLNGSQTKEDEDEEEEDDFMSVKRKDHELTEVELPDLTIPVSKRQAKKALSKKLSISTKGNPTKLKFDDEGVAHAIYELEDEEDFIKRGDAKEQKKAFVSRETEVMNEADEEDKIMAKEKRQEKKRKRKEVEKRMRDEELQSGDDEETVYTLGGDVDLERDMEYSTDEEEQPQNKKPKWFENDKHNRKNPVNHIVEIDEPETLEDLESLTARLLQH</sequence>
<reference key="1">
    <citation type="journal article" date="2007" name="Nat. Biotechnol.">
        <title>Genome sequence of the lignocellulose-bioconverting and xylose-fermenting yeast Pichia stipitis.</title>
        <authorList>
            <person name="Jeffries T.W."/>
            <person name="Grigoriev I.V."/>
            <person name="Grimwood J."/>
            <person name="Laplaza J.M."/>
            <person name="Aerts A."/>
            <person name="Salamov A."/>
            <person name="Schmutz J."/>
            <person name="Lindquist E."/>
            <person name="Dehal P."/>
            <person name="Shapiro H."/>
            <person name="Jin Y.-S."/>
            <person name="Passoth V."/>
            <person name="Richardson P.M."/>
        </authorList>
    </citation>
    <scope>NUCLEOTIDE SEQUENCE [LARGE SCALE GENOMIC DNA]</scope>
    <source>
        <strain>ATCC 58785 / CBS 6054 / NBRC 10063 / NRRL Y-11545</strain>
    </source>
</reference>